<gene>
    <name type="primary">mug97</name>
    <name type="synonym">meu33</name>
    <name type="ORF">SPBC146.11c</name>
</gene>
<evidence type="ECO:0000255" key="1"/>
<evidence type="ECO:0000269" key="2">
    <source>
    </source>
</evidence>
<evidence type="ECO:0000305" key="3"/>
<organism>
    <name type="scientific">Schizosaccharomyces pombe (strain 972 / ATCC 24843)</name>
    <name type="common">Fission yeast</name>
    <dbReference type="NCBI Taxonomy" id="284812"/>
    <lineage>
        <taxon>Eukaryota</taxon>
        <taxon>Fungi</taxon>
        <taxon>Dikarya</taxon>
        <taxon>Ascomycota</taxon>
        <taxon>Taphrinomycotina</taxon>
        <taxon>Schizosaccharomycetes</taxon>
        <taxon>Schizosaccharomycetales</taxon>
        <taxon>Schizosaccharomycetaceae</taxon>
        <taxon>Schizosaccharomyces</taxon>
    </lineage>
</organism>
<comment type="function">
    <text evidence="2">Required for correct meiotic chromosome segregation. Appears to also have role in sporulation.</text>
</comment>
<comment type="subcellular location">
    <subcellularLocation>
        <location evidence="3">Membrane</location>
        <topology evidence="3">Multi-pass membrane protein</topology>
    </subcellularLocation>
</comment>
<comment type="sequence caution" evidence="3">
    <conflict type="erroneous gene model prediction">
        <sequence resource="EMBL-CDS" id="BAE46409"/>
    </conflict>
</comment>
<accession>Q9Y800</accession>
<accession>Q3LFP6</accession>
<dbReference type="EMBL" id="AB237169">
    <property type="protein sequence ID" value="BAE46409.1"/>
    <property type="status" value="ALT_SEQ"/>
    <property type="molecule type" value="Genomic_DNA"/>
</dbReference>
<dbReference type="EMBL" id="CU329671">
    <property type="protein sequence ID" value="CAB46764.2"/>
    <property type="molecule type" value="Genomic_DNA"/>
</dbReference>
<dbReference type="PIR" id="T39425">
    <property type="entry name" value="T39425"/>
</dbReference>
<dbReference type="RefSeq" id="NP_595400.2">
    <property type="nucleotide sequence ID" value="NM_001021307.2"/>
</dbReference>
<dbReference type="BioGRID" id="276689">
    <property type="interactions" value="2"/>
</dbReference>
<dbReference type="PaxDb" id="4896-SPBC146.11c.1"/>
<dbReference type="EnsemblFungi" id="SPBC146.11c.1">
    <property type="protein sequence ID" value="SPBC146.11c.1:pep"/>
    <property type="gene ID" value="SPBC146.11c"/>
</dbReference>
<dbReference type="GeneID" id="2540153"/>
<dbReference type="KEGG" id="spo:2540153"/>
<dbReference type="PomBase" id="SPBC146.11c">
    <property type="gene designation" value="mug97"/>
</dbReference>
<dbReference type="VEuPathDB" id="FungiDB:SPBC146.11c"/>
<dbReference type="HOGENOM" id="CLU_804503_0_0_1"/>
<dbReference type="InParanoid" id="Q9Y800"/>
<dbReference type="PRO" id="PR:Q9Y800"/>
<dbReference type="Proteomes" id="UP000002485">
    <property type="component" value="Chromosome II"/>
</dbReference>
<dbReference type="GO" id="GO:0016020">
    <property type="term" value="C:membrane"/>
    <property type="evidence" value="ECO:0007669"/>
    <property type="project" value="UniProtKB-SubCell"/>
</dbReference>
<dbReference type="GO" id="GO:0007059">
    <property type="term" value="P:chromosome segregation"/>
    <property type="evidence" value="ECO:0007669"/>
    <property type="project" value="UniProtKB-KW"/>
</dbReference>
<dbReference type="GO" id="GO:0051321">
    <property type="term" value="P:meiotic cell cycle"/>
    <property type="evidence" value="ECO:0007669"/>
    <property type="project" value="UniProtKB-KW"/>
</dbReference>
<dbReference type="GO" id="GO:0030435">
    <property type="term" value="P:sporulation resulting in formation of a cellular spore"/>
    <property type="evidence" value="ECO:0007669"/>
    <property type="project" value="UniProtKB-KW"/>
</dbReference>
<proteinExistence type="evidence at protein level"/>
<feature type="chain" id="PRO_0000116850" description="Meiotically up-regulated gene 97 protein">
    <location>
        <begin position="1"/>
        <end position="345"/>
    </location>
</feature>
<feature type="transmembrane region" description="Helical" evidence="1">
    <location>
        <begin position="292"/>
        <end position="312"/>
    </location>
</feature>
<feature type="transmembrane region" description="Helical" evidence="1">
    <location>
        <begin position="319"/>
        <end position="329"/>
    </location>
</feature>
<keyword id="KW-0159">Chromosome partition</keyword>
<keyword id="KW-0469">Meiosis</keyword>
<keyword id="KW-0472">Membrane</keyword>
<keyword id="KW-1185">Reference proteome</keyword>
<keyword id="KW-0749">Sporulation</keyword>
<keyword id="KW-0812">Transmembrane</keyword>
<keyword id="KW-1133">Transmembrane helix</keyword>
<sequence>MSILNSGSCMMTDTNQNMECKVDFKKGEFDLQPLQINQFGFTKTQLHKPLTRNLSNKEDTHVPKRQKVSEPYFRGETERNVKSHQDRAASIYHEAMNGASGIHKQMSLPEYSPQMGNSWEIQVPMTTRHSISETPTKPFTATTAIAGSAGSLPRNTTIGLPGPSALLKHESGKNENQVRVCLYHKHYSRWYLPFDKDDDNQLVEAYAKYFSSENRPSIFYVLQGISFGPECEYVLRRKHWWNPWAEKVMRREIVERKIDTHPGCRTVAERYEQIEASGSEELLIIPIYKINMWVLSLLLFSAGGSVLIGLWMRLSDPSFAHGMLLNLGIGSIGSFLYLLSNTWCR</sequence>
<protein>
    <recommendedName>
        <fullName>Meiotically up-regulated gene 97 protein</fullName>
    </recommendedName>
    <alternativeName>
        <fullName>Meiotic expression up-regulated protein 33</fullName>
    </alternativeName>
</protein>
<reference key="1">
    <citation type="submission" date="2005-10" db="EMBL/GenBank/DDBJ databases">
        <title>Meiotic expression upregulated.</title>
        <authorList>
            <person name="Saito T.T."/>
            <person name="Nojima H."/>
        </authorList>
    </citation>
    <scope>NUCLEOTIDE SEQUENCE [GENOMIC DNA]</scope>
</reference>
<reference key="2">
    <citation type="journal article" date="2002" name="Nature">
        <title>The genome sequence of Schizosaccharomyces pombe.</title>
        <authorList>
            <person name="Wood V."/>
            <person name="Gwilliam R."/>
            <person name="Rajandream M.A."/>
            <person name="Lyne M.H."/>
            <person name="Lyne R."/>
            <person name="Stewart A."/>
            <person name="Sgouros J.G."/>
            <person name="Peat N."/>
            <person name="Hayles J."/>
            <person name="Baker S.G."/>
            <person name="Basham D."/>
            <person name="Bowman S."/>
            <person name="Brooks K."/>
            <person name="Brown D."/>
            <person name="Brown S."/>
            <person name="Chillingworth T."/>
            <person name="Churcher C.M."/>
            <person name="Collins M."/>
            <person name="Connor R."/>
            <person name="Cronin A."/>
            <person name="Davis P."/>
            <person name="Feltwell T."/>
            <person name="Fraser A."/>
            <person name="Gentles S."/>
            <person name="Goble A."/>
            <person name="Hamlin N."/>
            <person name="Harris D.E."/>
            <person name="Hidalgo J."/>
            <person name="Hodgson G."/>
            <person name="Holroyd S."/>
            <person name="Hornsby T."/>
            <person name="Howarth S."/>
            <person name="Huckle E.J."/>
            <person name="Hunt S."/>
            <person name="Jagels K."/>
            <person name="James K.D."/>
            <person name="Jones L."/>
            <person name="Jones M."/>
            <person name="Leather S."/>
            <person name="McDonald S."/>
            <person name="McLean J."/>
            <person name="Mooney P."/>
            <person name="Moule S."/>
            <person name="Mungall K.L."/>
            <person name="Murphy L.D."/>
            <person name="Niblett D."/>
            <person name="Odell C."/>
            <person name="Oliver K."/>
            <person name="O'Neil S."/>
            <person name="Pearson D."/>
            <person name="Quail M.A."/>
            <person name="Rabbinowitsch E."/>
            <person name="Rutherford K.M."/>
            <person name="Rutter S."/>
            <person name="Saunders D."/>
            <person name="Seeger K."/>
            <person name="Sharp S."/>
            <person name="Skelton J."/>
            <person name="Simmonds M.N."/>
            <person name="Squares R."/>
            <person name="Squares S."/>
            <person name="Stevens K."/>
            <person name="Taylor K."/>
            <person name="Taylor R.G."/>
            <person name="Tivey A."/>
            <person name="Walsh S.V."/>
            <person name="Warren T."/>
            <person name="Whitehead S."/>
            <person name="Woodward J.R."/>
            <person name="Volckaert G."/>
            <person name="Aert R."/>
            <person name="Robben J."/>
            <person name="Grymonprez B."/>
            <person name="Weltjens I."/>
            <person name="Vanstreels E."/>
            <person name="Rieger M."/>
            <person name="Schaefer M."/>
            <person name="Mueller-Auer S."/>
            <person name="Gabel C."/>
            <person name="Fuchs M."/>
            <person name="Duesterhoeft A."/>
            <person name="Fritzc C."/>
            <person name="Holzer E."/>
            <person name="Moestl D."/>
            <person name="Hilbert H."/>
            <person name="Borzym K."/>
            <person name="Langer I."/>
            <person name="Beck A."/>
            <person name="Lehrach H."/>
            <person name="Reinhardt R."/>
            <person name="Pohl T.M."/>
            <person name="Eger P."/>
            <person name="Zimmermann W."/>
            <person name="Wedler H."/>
            <person name="Wambutt R."/>
            <person name="Purnelle B."/>
            <person name="Goffeau A."/>
            <person name="Cadieu E."/>
            <person name="Dreano S."/>
            <person name="Gloux S."/>
            <person name="Lelaure V."/>
            <person name="Mottier S."/>
            <person name="Galibert F."/>
            <person name="Aves S.J."/>
            <person name="Xiang Z."/>
            <person name="Hunt C."/>
            <person name="Moore K."/>
            <person name="Hurst S.M."/>
            <person name="Lucas M."/>
            <person name="Rochet M."/>
            <person name="Gaillardin C."/>
            <person name="Tallada V.A."/>
            <person name="Garzon A."/>
            <person name="Thode G."/>
            <person name="Daga R.R."/>
            <person name="Cruzado L."/>
            <person name="Jimenez J."/>
            <person name="Sanchez M."/>
            <person name="del Rey F."/>
            <person name="Benito J."/>
            <person name="Dominguez A."/>
            <person name="Revuelta J.L."/>
            <person name="Moreno S."/>
            <person name="Armstrong J."/>
            <person name="Forsburg S.L."/>
            <person name="Cerutti L."/>
            <person name="Lowe T."/>
            <person name="McCombie W.R."/>
            <person name="Paulsen I."/>
            <person name="Potashkin J."/>
            <person name="Shpakovski G.V."/>
            <person name="Ussery D."/>
            <person name="Barrell B.G."/>
            <person name="Nurse P."/>
        </authorList>
    </citation>
    <scope>NUCLEOTIDE SEQUENCE [LARGE SCALE GENOMIC DNA]</scope>
    <source>
        <strain>972 / ATCC 24843</strain>
    </source>
</reference>
<reference key="3">
    <citation type="journal article" date="2011" name="Science">
        <title>Comparative functional genomics of the fission yeasts.</title>
        <authorList>
            <person name="Rhind N."/>
            <person name="Chen Z."/>
            <person name="Yassour M."/>
            <person name="Thompson D.A."/>
            <person name="Haas B.J."/>
            <person name="Habib N."/>
            <person name="Wapinski I."/>
            <person name="Roy S."/>
            <person name="Lin M.F."/>
            <person name="Heiman D.I."/>
            <person name="Young S.K."/>
            <person name="Furuya K."/>
            <person name="Guo Y."/>
            <person name="Pidoux A."/>
            <person name="Chen H.M."/>
            <person name="Robbertse B."/>
            <person name="Goldberg J.M."/>
            <person name="Aoki K."/>
            <person name="Bayne E.H."/>
            <person name="Berlin A.M."/>
            <person name="Desjardins C.A."/>
            <person name="Dobbs E."/>
            <person name="Dukaj L."/>
            <person name="Fan L."/>
            <person name="FitzGerald M.G."/>
            <person name="French C."/>
            <person name="Gujja S."/>
            <person name="Hansen K."/>
            <person name="Keifenheim D."/>
            <person name="Levin J.Z."/>
            <person name="Mosher R.A."/>
            <person name="Mueller C.A."/>
            <person name="Pfiffner J."/>
            <person name="Priest M."/>
            <person name="Russ C."/>
            <person name="Smialowska A."/>
            <person name="Swoboda P."/>
            <person name="Sykes S.M."/>
            <person name="Vaughn M."/>
            <person name="Vengrova S."/>
            <person name="Yoder R."/>
            <person name="Zeng Q."/>
            <person name="Allshire R."/>
            <person name="Baulcombe D."/>
            <person name="Birren B.W."/>
            <person name="Brown W."/>
            <person name="Ekwall K."/>
            <person name="Kellis M."/>
            <person name="Leatherwood J."/>
            <person name="Levin H."/>
            <person name="Margalit H."/>
            <person name="Martienssen R."/>
            <person name="Nieduszynski C.A."/>
            <person name="Spatafora J.W."/>
            <person name="Friedman N."/>
            <person name="Dalgaard J.Z."/>
            <person name="Baumann P."/>
            <person name="Niki H."/>
            <person name="Regev A."/>
            <person name="Nusbaum C."/>
        </authorList>
    </citation>
    <scope>REVISION OF GENE MODEL</scope>
</reference>
<reference key="4">
    <citation type="journal article" date="2005" name="Curr. Biol.">
        <title>A large-scale screen in S. pombe identifies seven novel genes required for critical meiotic events.</title>
        <authorList>
            <person name="Martin-Castellanos C."/>
            <person name="Blanco M."/>
            <person name="Rozalen A.E."/>
            <person name="Perez-Hidalgo L."/>
            <person name="Garcia A.I."/>
            <person name="Conde F."/>
            <person name="Mata J."/>
            <person name="Ellermeier C."/>
            <person name="Davis L."/>
            <person name="San-Segundo P."/>
            <person name="Smith G.R."/>
            <person name="Moreno S."/>
        </authorList>
    </citation>
    <scope>FUNCTION IN MEIOSIS/SPORULATION</scope>
</reference>
<name>MUG97_SCHPO</name>